<proteinExistence type="inferred from homology"/>
<feature type="chain" id="PRO_0000269420" description="Large ribosomal subunit protein bL21">
    <location>
        <begin position="1"/>
        <end position="103"/>
    </location>
</feature>
<sequence length="103" mass="11507">MYAVFQSGGKQHRVSEGQTLRLEKLDVETGATVEFDKVLLVANGEDIKVGAPLVEGGKVVAEVVQHGRGDKVKIVKFRRRKHSRKQQGHRQWFTEVKITGINA</sequence>
<protein>
    <recommendedName>
        <fullName evidence="1">Large ribosomal subunit protein bL21</fullName>
    </recommendedName>
    <alternativeName>
        <fullName evidence="2">50S ribosomal protein L21</fullName>
    </alternativeName>
</protein>
<gene>
    <name evidence="1" type="primary">rplU</name>
    <name type="ordered locus">VC_0435</name>
</gene>
<organism>
    <name type="scientific">Vibrio cholerae serotype O1 (strain ATCC 39315 / El Tor Inaba N16961)</name>
    <dbReference type="NCBI Taxonomy" id="243277"/>
    <lineage>
        <taxon>Bacteria</taxon>
        <taxon>Pseudomonadati</taxon>
        <taxon>Pseudomonadota</taxon>
        <taxon>Gammaproteobacteria</taxon>
        <taxon>Vibrionales</taxon>
        <taxon>Vibrionaceae</taxon>
        <taxon>Vibrio</taxon>
    </lineage>
</organism>
<evidence type="ECO:0000255" key="1">
    <source>
        <dbReference type="HAMAP-Rule" id="MF_01363"/>
    </source>
</evidence>
<evidence type="ECO:0000305" key="2"/>
<keyword id="KW-1185">Reference proteome</keyword>
<keyword id="KW-0687">Ribonucleoprotein</keyword>
<keyword id="KW-0689">Ribosomal protein</keyword>
<keyword id="KW-0694">RNA-binding</keyword>
<keyword id="KW-0699">rRNA-binding</keyword>
<accession>Q9KUT0</accession>
<comment type="function">
    <text evidence="1">This protein binds to 23S rRNA in the presence of protein L20.</text>
</comment>
<comment type="subunit">
    <text evidence="1">Part of the 50S ribosomal subunit. Contacts protein L20.</text>
</comment>
<comment type="similarity">
    <text evidence="1">Belongs to the bacterial ribosomal protein bL21 family.</text>
</comment>
<reference key="1">
    <citation type="journal article" date="2000" name="Nature">
        <title>DNA sequence of both chromosomes of the cholera pathogen Vibrio cholerae.</title>
        <authorList>
            <person name="Heidelberg J.F."/>
            <person name="Eisen J.A."/>
            <person name="Nelson W.C."/>
            <person name="Clayton R.A."/>
            <person name="Gwinn M.L."/>
            <person name="Dodson R.J."/>
            <person name="Haft D.H."/>
            <person name="Hickey E.K."/>
            <person name="Peterson J.D."/>
            <person name="Umayam L.A."/>
            <person name="Gill S.R."/>
            <person name="Nelson K.E."/>
            <person name="Read T.D."/>
            <person name="Tettelin H."/>
            <person name="Richardson D.L."/>
            <person name="Ermolaeva M.D."/>
            <person name="Vamathevan J.J."/>
            <person name="Bass S."/>
            <person name="Qin H."/>
            <person name="Dragoi I."/>
            <person name="Sellers P."/>
            <person name="McDonald L.A."/>
            <person name="Utterback T.R."/>
            <person name="Fleischmann R.D."/>
            <person name="Nierman W.C."/>
            <person name="White O."/>
            <person name="Salzberg S.L."/>
            <person name="Smith H.O."/>
            <person name="Colwell R.R."/>
            <person name="Mekalanos J.J."/>
            <person name="Venter J.C."/>
            <person name="Fraser C.M."/>
        </authorList>
    </citation>
    <scope>NUCLEOTIDE SEQUENCE [LARGE SCALE GENOMIC DNA]</scope>
    <source>
        <strain>ATCC 39315 / El Tor Inaba N16961</strain>
    </source>
</reference>
<dbReference type="EMBL" id="AE003852">
    <property type="protein sequence ID" value="AAF93608.1"/>
    <property type="molecule type" value="Genomic_DNA"/>
</dbReference>
<dbReference type="PIR" id="B82322">
    <property type="entry name" value="B82322"/>
</dbReference>
<dbReference type="RefSeq" id="NP_230089.1">
    <property type="nucleotide sequence ID" value="NC_002505.1"/>
</dbReference>
<dbReference type="RefSeq" id="WP_000271393.1">
    <property type="nucleotide sequence ID" value="NZ_LT906614.1"/>
</dbReference>
<dbReference type="SMR" id="Q9KUT0"/>
<dbReference type="STRING" id="243277.VC_0435"/>
<dbReference type="DNASU" id="2615696"/>
<dbReference type="EnsemblBacteria" id="AAF93608">
    <property type="protein sequence ID" value="AAF93608"/>
    <property type="gene ID" value="VC_0435"/>
</dbReference>
<dbReference type="GeneID" id="95679033"/>
<dbReference type="KEGG" id="vch:VC_0435"/>
<dbReference type="PATRIC" id="fig|243277.26.peg.409"/>
<dbReference type="eggNOG" id="COG0261">
    <property type="taxonomic scope" value="Bacteria"/>
</dbReference>
<dbReference type="HOGENOM" id="CLU_061463_3_3_6"/>
<dbReference type="PRO" id="PR:Q9KUT0"/>
<dbReference type="Proteomes" id="UP000000584">
    <property type="component" value="Chromosome 1"/>
</dbReference>
<dbReference type="GO" id="GO:0005737">
    <property type="term" value="C:cytoplasm"/>
    <property type="evidence" value="ECO:0007669"/>
    <property type="project" value="UniProtKB-ARBA"/>
</dbReference>
<dbReference type="GO" id="GO:1990904">
    <property type="term" value="C:ribonucleoprotein complex"/>
    <property type="evidence" value="ECO:0007669"/>
    <property type="project" value="UniProtKB-KW"/>
</dbReference>
<dbReference type="GO" id="GO:0005840">
    <property type="term" value="C:ribosome"/>
    <property type="evidence" value="ECO:0007669"/>
    <property type="project" value="UniProtKB-KW"/>
</dbReference>
<dbReference type="GO" id="GO:0019843">
    <property type="term" value="F:rRNA binding"/>
    <property type="evidence" value="ECO:0007669"/>
    <property type="project" value="UniProtKB-UniRule"/>
</dbReference>
<dbReference type="GO" id="GO:0003735">
    <property type="term" value="F:structural constituent of ribosome"/>
    <property type="evidence" value="ECO:0000318"/>
    <property type="project" value="GO_Central"/>
</dbReference>
<dbReference type="GO" id="GO:0006412">
    <property type="term" value="P:translation"/>
    <property type="evidence" value="ECO:0007669"/>
    <property type="project" value="UniProtKB-UniRule"/>
</dbReference>
<dbReference type="HAMAP" id="MF_01363">
    <property type="entry name" value="Ribosomal_bL21"/>
    <property type="match status" value="1"/>
</dbReference>
<dbReference type="InterPro" id="IPR028909">
    <property type="entry name" value="bL21-like"/>
</dbReference>
<dbReference type="InterPro" id="IPR036164">
    <property type="entry name" value="bL21-like_sf"/>
</dbReference>
<dbReference type="InterPro" id="IPR001787">
    <property type="entry name" value="Ribosomal_bL21"/>
</dbReference>
<dbReference type="InterPro" id="IPR018258">
    <property type="entry name" value="Ribosomal_bL21_CS"/>
</dbReference>
<dbReference type="NCBIfam" id="TIGR00061">
    <property type="entry name" value="L21"/>
    <property type="match status" value="1"/>
</dbReference>
<dbReference type="PANTHER" id="PTHR21349">
    <property type="entry name" value="50S RIBOSOMAL PROTEIN L21"/>
    <property type="match status" value="1"/>
</dbReference>
<dbReference type="PANTHER" id="PTHR21349:SF0">
    <property type="entry name" value="LARGE RIBOSOMAL SUBUNIT PROTEIN BL21M"/>
    <property type="match status" value="1"/>
</dbReference>
<dbReference type="Pfam" id="PF00829">
    <property type="entry name" value="Ribosomal_L21p"/>
    <property type="match status" value="1"/>
</dbReference>
<dbReference type="SUPFAM" id="SSF141091">
    <property type="entry name" value="L21p-like"/>
    <property type="match status" value="1"/>
</dbReference>
<dbReference type="PROSITE" id="PS01169">
    <property type="entry name" value="RIBOSOMAL_L21"/>
    <property type="match status" value="1"/>
</dbReference>
<name>RL21_VIBCH</name>